<feature type="chain" id="PRO_1000127377" description="Large ribosomal subunit protein bL35">
    <location>
        <begin position="1"/>
        <end position="66"/>
    </location>
</feature>
<keyword id="KW-0687">Ribonucleoprotein</keyword>
<keyword id="KW-0689">Ribosomal protein</keyword>
<accession>B0UPJ7</accession>
<gene>
    <name evidence="1" type="primary">rpmI</name>
    <name type="ordered locus">M446_5321</name>
</gene>
<sequence length="66" mass="7337">MPKLKTKSGAKKRFKITGTGKVLYAQAGKRHGMIKRTTKQIRNLRGTTTLFEGDAANVKKFFLPNG</sequence>
<name>RL35_METS4</name>
<organism>
    <name type="scientific">Methylobacterium sp. (strain 4-46)</name>
    <dbReference type="NCBI Taxonomy" id="426117"/>
    <lineage>
        <taxon>Bacteria</taxon>
        <taxon>Pseudomonadati</taxon>
        <taxon>Pseudomonadota</taxon>
        <taxon>Alphaproteobacteria</taxon>
        <taxon>Hyphomicrobiales</taxon>
        <taxon>Methylobacteriaceae</taxon>
        <taxon>Methylobacterium</taxon>
    </lineage>
</organism>
<proteinExistence type="inferred from homology"/>
<dbReference type="EMBL" id="CP000943">
    <property type="protein sequence ID" value="ACA19639.1"/>
    <property type="molecule type" value="Genomic_DNA"/>
</dbReference>
<dbReference type="RefSeq" id="WP_012335024.1">
    <property type="nucleotide sequence ID" value="NC_010511.1"/>
</dbReference>
<dbReference type="SMR" id="B0UPJ7"/>
<dbReference type="STRING" id="426117.M446_5321"/>
<dbReference type="KEGG" id="met:M446_5321"/>
<dbReference type="eggNOG" id="COG0291">
    <property type="taxonomic scope" value="Bacteria"/>
</dbReference>
<dbReference type="HOGENOM" id="CLU_169643_2_1_5"/>
<dbReference type="GO" id="GO:0022625">
    <property type="term" value="C:cytosolic large ribosomal subunit"/>
    <property type="evidence" value="ECO:0007669"/>
    <property type="project" value="TreeGrafter"/>
</dbReference>
<dbReference type="GO" id="GO:0003735">
    <property type="term" value="F:structural constituent of ribosome"/>
    <property type="evidence" value="ECO:0007669"/>
    <property type="project" value="InterPro"/>
</dbReference>
<dbReference type="GO" id="GO:0006412">
    <property type="term" value="P:translation"/>
    <property type="evidence" value="ECO:0007669"/>
    <property type="project" value="UniProtKB-UniRule"/>
</dbReference>
<dbReference type="FunFam" id="4.10.410.60:FF:000001">
    <property type="entry name" value="50S ribosomal protein L35"/>
    <property type="match status" value="1"/>
</dbReference>
<dbReference type="Gene3D" id="4.10.410.60">
    <property type="match status" value="1"/>
</dbReference>
<dbReference type="HAMAP" id="MF_00514">
    <property type="entry name" value="Ribosomal_bL35"/>
    <property type="match status" value="1"/>
</dbReference>
<dbReference type="InterPro" id="IPR001706">
    <property type="entry name" value="Ribosomal_bL35"/>
</dbReference>
<dbReference type="InterPro" id="IPR021137">
    <property type="entry name" value="Ribosomal_bL35-like"/>
</dbReference>
<dbReference type="InterPro" id="IPR018265">
    <property type="entry name" value="Ribosomal_bL35_CS"/>
</dbReference>
<dbReference type="InterPro" id="IPR037229">
    <property type="entry name" value="Ribosomal_bL35_sf"/>
</dbReference>
<dbReference type="NCBIfam" id="TIGR00001">
    <property type="entry name" value="rpmI_bact"/>
    <property type="match status" value="1"/>
</dbReference>
<dbReference type="PANTHER" id="PTHR33343">
    <property type="entry name" value="54S RIBOSOMAL PROTEIN BL35M"/>
    <property type="match status" value="1"/>
</dbReference>
<dbReference type="PANTHER" id="PTHR33343:SF1">
    <property type="entry name" value="LARGE RIBOSOMAL SUBUNIT PROTEIN BL35M"/>
    <property type="match status" value="1"/>
</dbReference>
<dbReference type="Pfam" id="PF01632">
    <property type="entry name" value="Ribosomal_L35p"/>
    <property type="match status" value="1"/>
</dbReference>
<dbReference type="PRINTS" id="PR00064">
    <property type="entry name" value="RIBOSOMALL35"/>
</dbReference>
<dbReference type="SUPFAM" id="SSF143034">
    <property type="entry name" value="L35p-like"/>
    <property type="match status" value="1"/>
</dbReference>
<dbReference type="PROSITE" id="PS00936">
    <property type="entry name" value="RIBOSOMAL_L35"/>
    <property type="match status" value="1"/>
</dbReference>
<comment type="similarity">
    <text evidence="1">Belongs to the bacterial ribosomal protein bL35 family.</text>
</comment>
<reference key="1">
    <citation type="submission" date="2008-02" db="EMBL/GenBank/DDBJ databases">
        <title>Complete sequence of chromosome of Methylobacterium sp. 4-46.</title>
        <authorList>
            <consortium name="US DOE Joint Genome Institute"/>
            <person name="Copeland A."/>
            <person name="Lucas S."/>
            <person name="Lapidus A."/>
            <person name="Glavina del Rio T."/>
            <person name="Dalin E."/>
            <person name="Tice H."/>
            <person name="Bruce D."/>
            <person name="Goodwin L."/>
            <person name="Pitluck S."/>
            <person name="Chertkov O."/>
            <person name="Brettin T."/>
            <person name="Detter J.C."/>
            <person name="Han C."/>
            <person name="Kuske C.R."/>
            <person name="Schmutz J."/>
            <person name="Larimer F."/>
            <person name="Land M."/>
            <person name="Hauser L."/>
            <person name="Kyrpides N."/>
            <person name="Ivanova N."/>
            <person name="Marx C.J."/>
            <person name="Richardson P."/>
        </authorList>
    </citation>
    <scope>NUCLEOTIDE SEQUENCE [LARGE SCALE GENOMIC DNA]</scope>
    <source>
        <strain>4-46</strain>
    </source>
</reference>
<evidence type="ECO:0000255" key="1">
    <source>
        <dbReference type="HAMAP-Rule" id="MF_00514"/>
    </source>
</evidence>
<evidence type="ECO:0000305" key="2"/>
<protein>
    <recommendedName>
        <fullName evidence="1">Large ribosomal subunit protein bL35</fullName>
    </recommendedName>
    <alternativeName>
        <fullName evidence="2">50S ribosomal protein L35</fullName>
    </alternativeName>
</protein>